<protein>
    <recommendedName>
        <fullName evidence="1">F420-dependent glucose-6-phosphate dehydrogenase</fullName>
        <shortName evidence="1">FGD</shortName>
        <shortName evidence="1">G6PD</shortName>
        <ecNumber evidence="1">1.1.98.2</ecNumber>
    </recommendedName>
</protein>
<name>FGD_KINRD</name>
<feature type="chain" id="PRO_0000413588" description="F420-dependent glucose-6-phosphate dehydrogenase">
    <location>
        <begin position="1"/>
        <end position="337"/>
    </location>
</feature>
<feature type="active site" description="Proton donor" evidence="1">
    <location>
        <position position="45"/>
    </location>
</feature>
<feature type="active site" description="Proton acceptor" evidence="1">
    <location>
        <position position="114"/>
    </location>
</feature>
<feature type="binding site" evidence="1">
    <location>
        <position position="44"/>
    </location>
    <ligand>
        <name>coenzyme F420-(gamma-Glu)n</name>
        <dbReference type="ChEBI" id="CHEBI:133980"/>
    </ligand>
</feature>
<feature type="binding site" evidence="1">
    <location>
        <position position="81"/>
    </location>
    <ligand>
        <name>coenzyme F420-(gamma-Glu)n</name>
        <dbReference type="ChEBI" id="CHEBI:133980"/>
    </ligand>
</feature>
<feature type="binding site" evidence="1">
    <location>
        <begin position="112"/>
        <end position="113"/>
    </location>
    <ligand>
        <name>coenzyme F420-(gamma-Glu)n</name>
        <dbReference type="ChEBI" id="CHEBI:133980"/>
    </ligand>
</feature>
<feature type="binding site" evidence="1">
    <location>
        <position position="117"/>
    </location>
    <ligand>
        <name>coenzyme F420-(gamma-Glu)n</name>
        <dbReference type="ChEBI" id="CHEBI:133980"/>
    </ligand>
</feature>
<feature type="binding site" evidence="1">
    <location>
        <begin position="180"/>
        <end position="181"/>
    </location>
    <ligand>
        <name>coenzyme F420-(gamma-Glu)n</name>
        <dbReference type="ChEBI" id="CHEBI:133980"/>
    </ligand>
</feature>
<feature type="binding site" evidence="1">
    <location>
        <begin position="183"/>
        <end position="184"/>
    </location>
    <ligand>
        <name>coenzyme F420-(gamma-Glu)n</name>
        <dbReference type="ChEBI" id="CHEBI:133980"/>
    </ligand>
</feature>
<feature type="binding site" evidence="1">
    <location>
        <position position="198"/>
    </location>
    <ligand>
        <name>substrate</name>
    </ligand>
</feature>
<feature type="binding site" evidence="1">
    <location>
        <position position="201"/>
    </location>
    <ligand>
        <name>substrate</name>
    </ligand>
</feature>
<feature type="binding site" evidence="1">
    <location>
        <position position="262"/>
    </location>
    <ligand>
        <name>substrate</name>
    </ligand>
</feature>
<feature type="binding site" evidence="1">
    <location>
        <position position="286"/>
    </location>
    <ligand>
        <name>substrate</name>
    </ligand>
</feature>
<comment type="function">
    <text evidence="1">Catalyzes the coenzyme F420-dependent oxidation of glucose 6-phosphate (G6P) to 6-phosphogluconolactone.</text>
</comment>
<comment type="catalytic activity">
    <reaction evidence="1">
        <text>oxidized coenzyme F420-(gamma-L-Glu)(n) + D-glucose 6-phosphate + H(+) = 6-phospho-D-glucono-1,5-lactone + reduced coenzyme F420-(gamma-L-Glu)(n)</text>
        <dbReference type="Rhea" id="RHEA:27294"/>
        <dbReference type="Rhea" id="RHEA-COMP:12939"/>
        <dbReference type="Rhea" id="RHEA-COMP:14378"/>
        <dbReference type="ChEBI" id="CHEBI:15378"/>
        <dbReference type="ChEBI" id="CHEBI:57955"/>
        <dbReference type="ChEBI" id="CHEBI:61548"/>
        <dbReference type="ChEBI" id="CHEBI:133980"/>
        <dbReference type="ChEBI" id="CHEBI:139511"/>
        <dbReference type="EC" id="1.1.98.2"/>
    </reaction>
</comment>
<comment type="subunit">
    <text evidence="1">Homodimer.</text>
</comment>
<comment type="similarity">
    <text evidence="1">Belongs to the F420-dependent glucose-6-phosphate dehydrogenase family.</text>
</comment>
<evidence type="ECO:0000255" key="1">
    <source>
        <dbReference type="HAMAP-Rule" id="MF_02123"/>
    </source>
</evidence>
<organism>
    <name type="scientific">Kineococcus radiotolerans (strain ATCC BAA-149 / DSM 14245 / SRS30216)</name>
    <dbReference type="NCBI Taxonomy" id="266940"/>
    <lineage>
        <taxon>Bacteria</taxon>
        <taxon>Bacillati</taxon>
        <taxon>Actinomycetota</taxon>
        <taxon>Actinomycetes</taxon>
        <taxon>Kineosporiales</taxon>
        <taxon>Kineosporiaceae</taxon>
        <taxon>Kineococcus</taxon>
    </lineage>
</organism>
<sequence>MVDTHGQPLKLGYKASAEQFAPGKLADFAVQAEEQGLDSVWISDHFQPWRHVDGHAPSALVWLPWVAAKTSRVQLGTSVLTPTLRYNPAVIAQAFATLGCLAPGRAILGIGTGEALNETAVGVTFPETRERFARLREAVRLIKQLWSEERVTFEGEYYNLHDATVYDRPEQPVPIYVAAGGPGVTKYAGRAGDGYICTSGKGMDLYSETLLPALREGLEASGRTEGQIDRTIEIKLSFDEDPAQALENTRFWAPLSLTAEQKSSVHDPIEMARLADELPIEQVAKRWIVSSDPTEVAAAVQGYVDAGFTHLVFHAPGQDQSRFLTQFSADVVPLLRP</sequence>
<accession>A6WD69</accession>
<proteinExistence type="inferred from homology"/>
<gene>
    <name evidence="1" type="primary">fgd</name>
    <name type="ordered locus">Krad_3294</name>
</gene>
<keyword id="KW-0119">Carbohydrate metabolism</keyword>
<keyword id="KW-0560">Oxidoreductase</keyword>
<keyword id="KW-1185">Reference proteome</keyword>
<dbReference type="EC" id="1.1.98.2" evidence="1"/>
<dbReference type="EMBL" id="CP000750">
    <property type="protein sequence ID" value="ABS04758.1"/>
    <property type="molecule type" value="Genomic_DNA"/>
</dbReference>
<dbReference type="RefSeq" id="WP_012086983.1">
    <property type="nucleotide sequence ID" value="NC_009664.2"/>
</dbReference>
<dbReference type="SMR" id="A6WD69"/>
<dbReference type="STRING" id="266940.Krad_3294"/>
<dbReference type="KEGG" id="kra:Krad_3294"/>
<dbReference type="eggNOG" id="COG2141">
    <property type="taxonomic scope" value="Bacteria"/>
</dbReference>
<dbReference type="HOGENOM" id="CLU_027853_4_0_11"/>
<dbReference type="OrthoDB" id="180193at2"/>
<dbReference type="Proteomes" id="UP000001116">
    <property type="component" value="Chromosome"/>
</dbReference>
<dbReference type="GO" id="GO:0070967">
    <property type="term" value="F:coenzyme F420 binding"/>
    <property type="evidence" value="ECO:0007669"/>
    <property type="project" value="UniProtKB-UniRule"/>
</dbReference>
<dbReference type="GO" id="GO:0052749">
    <property type="term" value="F:glucose-6-phosphate dehydrogenase (coenzyme F420) activity"/>
    <property type="evidence" value="ECO:0007669"/>
    <property type="project" value="UniProtKB-EC"/>
</dbReference>
<dbReference type="GO" id="GO:0016705">
    <property type="term" value="F:oxidoreductase activity, acting on paired donors, with incorporation or reduction of molecular oxygen"/>
    <property type="evidence" value="ECO:0007669"/>
    <property type="project" value="InterPro"/>
</dbReference>
<dbReference type="GO" id="GO:0005975">
    <property type="term" value="P:carbohydrate metabolic process"/>
    <property type="evidence" value="ECO:0007669"/>
    <property type="project" value="UniProtKB-UniRule"/>
</dbReference>
<dbReference type="CDD" id="cd01097">
    <property type="entry name" value="Tetrahydromethanopterin_reductase"/>
    <property type="match status" value="1"/>
</dbReference>
<dbReference type="Gene3D" id="3.20.20.30">
    <property type="entry name" value="Luciferase-like domain"/>
    <property type="match status" value="1"/>
</dbReference>
<dbReference type="HAMAP" id="MF_02123">
    <property type="entry name" value="F420_G6P_DH"/>
    <property type="match status" value="1"/>
</dbReference>
<dbReference type="InterPro" id="IPR019944">
    <property type="entry name" value="F420-dep_G6P_DH"/>
</dbReference>
<dbReference type="InterPro" id="IPR050564">
    <property type="entry name" value="F420-G6PD/mer"/>
</dbReference>
<dbReference type="InterPro" id="IPR019945">
    <property type="entry name" value="F420_G6P_DH-rel"/>
</dbReference>
<dbReference type="InterPro" id="IPR011251">
    <property type="entry name" value="Luciferase-like_dom"/>
</dbReference>
<dbReference type="InterPro" id="IPR036661">
    <property type="entry name" value="Luciferase-like_sf"/>
</dbReference>
<dbReference type="NCBIfam" id="TIGR03554">
    <property type="entry name" value="F420_G6P_DH"/>
    <property type="match status" value="1"/>
</dbReference>
<dbReference type="NCBIfam" id="TIGR03557">
    <property type="entry name" value="F420_G6P_family"/>
    <property type="match status" value="1"/>
</dbReference>
<dbReference type="PANTHER" id="PTHR43244">
    <property type="match status" value="1"/>
</dbReference>
<dbReference type="PANTHER" id="PTHR43244:SF1">
    <property type="entry name" value="5,10-METHYLENETETRAHYDROMETHANOPTERIN REDUCTASE"/>
    <property type="match status" value="1"/>
</dbReference>
<dbReference type="Pfam" id="PF00296">
    <property type="entry name" value="Bac_luciferase"/>
    <property type="match status" value="1"/>
</dbReference>
<dbReference type="SUPFAM" id="SSF51679">
    <property type="entry name" value="Bacterial luciferase-like"/>
    <property type="match status" value="1"/>
</dbReference>
<reference key="1">
    <citation type="journal article" date="2008" name="PLoS ONE">
        <title>Survival in nuclear waste, extreme resistance, and potential applications gleaned from the genome sequence of Kineococcus radiotolerans SRS30216.</title>
        <authorList>
            <person name="Bagwell C.E."/>
            <person name="Bhat S."/>
            <person name="Hawkins G.M."/>
            <person name="Smith B.W."/>
            <person name="Biswas T."/>
            <person name="Hoover T.R."/>
            <person name="Saunders E."/>
            <person name="Han C.S."/>
            <person name="Tsodikov O.V."/>
            <person name="Shimkets L.J."/>
        </authorList>
    </citation>
    <scope>NUCLEOTIDE SEQUENCE [LARGE SCALE GENOMIC DNA]</scope>
    <source>
        <strain>ATCC BAA-149 / DSM 14245 / SRS30216</strain>
    </source>
</reference>